<feature type="chain" id="PRO_0000432948" description="Straight fiber protein pb4">
    <location>
        <begin position="1"/>
        <end position="688"/>
    </location>
</feature>
<organism>
    <name type="scientific">Escherichia phage T5</name>
    <name type="common">Enterobacteria phage T5</name>
    <dbReference type="NCBI Taxonomy" id="2695836"/>
    <lineage>
        <taxon>Viruses</taxon>
        <taxon>Duplodnaviria</taxon>
        <taxon>Heunggongvirae</taxon>
        <taxon>Uroviricota</taxon>
        <taxon>Caudoviricetes</taxon>
        <taxon>Demerecviridae</taxon>
        <taxon>Markadamsvirinae</taxon>
        <taxon>Tequintavirus</taxon>
        <taxon>Tequintavirus T5</taxon>
    </lineage>
</organism>
<dbReference type="EMBL" id="AY543070">
    <property type="protein sequence ID" value="AAQ92753.1"/>
    <property type="molecule type" value="Genomic_DNA"/>
</dbReference>
<dbReference type="EMBL" id="AY692264">
    <property type="protein sequence ID" value="AAU05272.1"/>
    <property type="molecule type" value="Genomic_DNA"/>
</dbReference>
<dbReference type="EMBL" id="AY587007">
    <property type="protein sequence ID" value="AAX12063.1"/>
    <property type="molecule type" value="Genomic_DNA"/>
</dbReference>
<dbReference type="RefSeq" id="YP_006965.1">
    <property type="nucleotide sequence ID" value="NC_005859.1"/>
</dbReference>
<dbReference type="PDB" id="7ZLV">
    <property type="method" value="EM"/>
    <property type="resolution" value="4.22 A"/>
    <property type="chains" value="h/i/j=1-688"/>
</dbReference>
<dbReference type="PDB" id="7ZN2">
    <property type="method" value="EM"/>
    <property type="resolution" value="4.29 A"/>
    <property type="chains" value="e/f/g=1-688"/>
</dbReference>
<dbReference type="PDB" id="7ZN4">
    <property type="method" value="EM"/>
    <property type="resolution" value="4.32 A"/>
    <property type="chains" value="e/f/g=1-688"/>
</dbReference>
<dbReference type="PDB" id="7ZQB">
    <property type="method" value="EM"/>
    <property type="resolution" value="3.88 A"/>
    <property type="chains" value="h/i/j=1-688"/>
</dbReference>
<dbReference type="PDBsum" id="7ZLV"/>
<dbReference type="PDBsum" id="7ZN2"/>
<dbReference type="PDBsum" id="7ZN4"/>
<dbReference type="PDBsum" id="7ZQB"/>
<dbReference type="EMDB" id="EMD-14790"/>
<dbReference type="EMDB" id="EMD-14799"/>
<dbReference type="EMDB" id="EMD-14800"/>
<dbReference type="EMDB" id="EMD-14869"/>
<dbReference type="SMR" id="Q6QGF0"/>
<dbReference type="GeneID" id="2777626"/>
<dbReference type="KEGG" id="vg:2777626"/>
<dbReference type="Proteomes" id="UP000002107">
    <property type="component" value="Genome"/>
</dbReference>
<dbReference type="Proteomes" id="UP000002141">
    <property type="component" value="Segment"/>
</dbReference>
<dbReference type="Proteomes" id="UP000002503">
    <property type="component" value="Segment"/>
</dbReference>
<dbReference type="GO" id="GO:0098015">
    <property type="term" value="C:virus tail"/>
    <property type="evidence" value="ECO:0000314"/>
    <property type="project" value="UniProtKB"/>
</dbReference>
<dbReference type="Pfam" id="PF24169">
    <property type="entry name" value="Fn3-I_PB4"/>
    <property type="match status" value="1"/>
</dbReference>
<dbReference type="Pfam" id="PF24170">
    <property type="entry name" value="Fn3-II_PB4"/>
    <property type="match status" value="1"/>
</dbReference>
<dbReference type="Pfam" id="PF24171">
    <property type="entry name" value="Fn3-III_PB4"/>
    <property type="match status" value="1"/>
</dbReference>
<dbReference type="Pfam" id="PF24168">
    <property type="entry name" value="PB4_spike"/>
    <property type="match status" value="1"/>
</dbReference>
<evidence type="ECO:0000269" key="1">
    <source>
    </source>
</evidence>
<evidence type="ECO:0000269" key="2">
    <source>
    </source>
</evidence>
<evidence type="ECO:0000303" key="3">
    <source>
    </source>
</evidence>
<evidence type="ECO:0000305" key="4">
    <source>
    </source>
</evidence>
<evidence type="ECO:0000312" key="5">
    <source>
        <dbReference type="EMBL" id="AAQ92753.1"/>
    </source>
</evidence>
<evidence type="ECO:0000312" key="6">
    <source>
        <dbReference type="EMBL" id="AAU05272.1"/>
    </source>
</evidence>
<evidence type="ECO:0000312" key="7">
    <source>
        <dbReference type="EMBL" id="AAX12063.1"/>
    </source>
</evidence>
<evidence type="ECO:0007744" key="8">
    <source>
        <dbReference type="PDB" id="7ZLV"/>
    </source>
</evidence>
<evidence type="ECO:0007744" key="9">
    <source>
        <dbReference type="PDB" id="7ZN2"/>
    </source>
</evidence>
<evidence type="ECO:0007744" key="10">
    <source>
        <dbReference type="PDB" id="7ZN4"/>
    </source>
</evidence>
<evidence type="ECO:0007744" key="11">
    <source>
        <dbReference type="PDB" id="7ZQB"/>
    </source>
</evidence>
<reference key="1">
    <citation type="submission" date="2004-01" db="EMBL/GenBank/DDBJ databases">
        <title>Bacteriophage T5 complete genome.</title>
        <authorList>
            <person name="Ksenzenko V.N."/>
            <person name="Kaliman A.V."/>
            <person name="Krutilina A.I."/>
            <person name="Shlyapnikov M.G."/>
        </authorList>
    </citation>
    <scope>NUCLEOTIDE SEQUENCE [LARGE SCALE GENOMIC DNA]</scope>
</reference>
<reference key="2">
    <citation type="journal article" date="2005" name="Virology">
        <title>Complete genome sequence of bacteriophage T5.</title>
        <authorList>
            <person name="Wang J."/>
            <person name="Jiang Y."/>
            <person name="Vincent M."/>
            <person name="Sun Y."/>
            <person name="Yu H."/>
            <person name="Wang J."/>
            <person name="Bao Q."/>
            <person name="Kong H."/>
            <person name="Hu S."/>
        </authorList>
    </citation>
    <scope>NUCLEOTIDE SEQUENCE [LARGE SCALE GENOMIC DNA]</scope>
    <scope>INDUCTION</scope>
    <source>
        <strain evidence="7">ATCC 11303-B5</strain>
    </source>
</reference>
<reference key="3">
    <citation type="journal article" date="2014" name="J. Virol.">
        <title>Insights into bacteriophage T5 structure from analysis of its morphogenesis genes and protein components.</title>
        <authorList>
            <person name="Zivanovic Y."/>
            <person name="Confalonieri F."/>
            <person name="Ponchon L."/>
            <person name="Lurz R."/>
            <person name="Chami M."/>
            <person name="Flayhan A."/>
            <person name="Renouard M."/>
            <person name="Huet A."/>
            <person name="Decottignies P."/>
            <person name="Davidson A.R."/>
            <person name="Breyton C."/>
            <person name="Boulanger P."/>
        </authorList>
    </citation>
    <scope>NUCLEOTIDE SEQUENCE [LARGE SCALE GENOMIC DNA]</scope>
    <scope>SUBCELLULAR LOCATION</scope>
    <source>
        <strain>St0 deletion mutant</strain>
    </source>
</reference>
<reference evidence="8 9 10 11" key="4">
    <citation type="journal article" date="2023" name="Sci. Adv.">
        <title>Structural basis of bacteriophage T5 infection trigger and E. coli cell wall perforation.</title>
        <authorList>
            <person name="Linares R."/>
            <person name="Arnaud C.A."/>
            <person name="Effantin G."/>
            <person name="Darnault C."/>
            <person name="Epalle N.H."/>
            <person name="Boeri Erba E."/>
            <person name="Schoehn G."/>
            <person name="Breyton C."/>
        </authorList>
    </citation>
    <scope>STRUCTURE BY ELECTRON MICROSCOPY (3.88 ANGSTROMS)</scope>
    <scope>FUNCTION</scope>
    <scope>SUBCELLULAR LOCATION</scope>
    <scope>SUBUNIT</scope>
    <scope>INTERACTION WITH BASEPLATE HUB PROTEIN PB3</scope>
    <scope>INTERACTION WITH RECEPTOR-BINDING PROTEIN PB5</scope>
</reference>
<comment type="function">
    <text evidence="2">Together with BHP-pb3, forms the central straight fiber, bearing the receptor binding protein RBP-pb5 at its C-terminus (PubMed:36961893). Upon RBP-pb5 binding to the host receptor FhuA, the central fiber reorganizes and undergoes structural rearrangements that lead to its bending, bringing BHP-pb3 close to the host membrane for anchoring (PubMed:36961893).</text>
</comment>
<comment type="subunit">
    <text evidence="2 4">Homotrimer (PubMed:36961893). Interacts with baseplate hub protein pb3 (PubMed:36961893). Interacts with receptor-binding protein pb5 (Probable).</text>
</comment>
<comment type="subcellular location">
    <subcellularLocation>
        <location evidence="1 2">Virion</location>
    </subcellularLocation>
    <text evidence="1 2">Component of the tail (PubMed:24198424, PubMed:36961893). Located under the baseplate and the BHP-pb3 trimer (PubMed:24198424, PubMed:36961893).</text>
</comment>
<accession>Q6QGF0</accession>
<sequence>MISNNAPAKMVLNSVLTGYTLAYIQHSIYSDYDVIGRSFWLKEGSNVTRRDFTGIDTFSVTINNLKPTTTYEVQGAFYDSIIDSELLNAQIGINLSDKQTFKMKSAPRITGARCESEPVDVGVGAPIVYIDTTGEADYCTIELKDNSNANNPWVKYYVGALMPTIMFGGVPIGSYKVRISGQISLPDGVTIDSSGYYEYPNVFEVRYNFVPPAAPINIVFKAARIADGKERYDLRVQWDWNRGAGANVREFVLSYIDSAEFVRTGWTKAQKINVGAAQSATIISFPWKVEHKFKVSSIAWGPDAQDVTDSAVQTFILNESTPLDNSFVNETGIEVNYAYIKGKIKDGSTWKQTFLIDAATGAINIGLLDAEGKAPISFDPVKKIVNVDGSVITKTINAANFVMTNLTGQDNPAIYTQGKTWGDTKSGIWMGMDNVTAKPKLDIGNATQYIRYDGNILRISSEVVIGTPNGDIDIQTGIQGKQTVFIYIIGTSLPAKPTSPAYPPSGWSKTPPNRTSNTQNIYCSTGTLDPVTNQLVSGTSWSDVVQWSGTEGVDGRPGATGQRGPGMYSLAIANLTAWNDSQANSFFTSNFGSGPVKYDVLTEYKSGAPGTAFTRQWNGSAWTSPAMVLHGDMIVNGTVTASKIVANNAFLSQIGVNIIYDRAAALSSNPEGSYKMKIDLQNGYIHIR</sequence>
<proteinExistence type="evidence at protein level"/>
<keyword id="KW-0002">3D-structure</keyword>
<keyword id="KW-0426">Late protein</keyword>
<keyword id="KW-1185">Reference proteome</keyword>
<keyword id="KW-1227">Viral tail protein</keyword>
<keyword id="KW-0946">Virion</keyword>
<gene>
    <name evidence="5" type="primary">D17</name>
    <name type="ORF">ORF126</name>
    <name evidence="5" type="ORF">T5.137</name>
    <name evidence="6" type="ORF">T5p133</name>
</gene>
<name>FIBC_BPT5</name>
<organismHost>
    <name type="scientific">Escherichia coli</name>
    <dbReference type="NCBI Taxonomy" id="562"/>
</organismHost>
<protein>
    <recommendedName>
        <fullName evidence="3">Straight fiber protein pb4</fullName>
        <shortName evidence="3">pb4</shortName>
    </recommendedName>
    <alternativeName>
        <fullName evidence="3">Tail protein pb4</fullName>
    </alternativeName>
</protein>